<name>MANBA_ASPOR</name>
<dbReference type="EC" id="3.2.1.25"/>
<dbReference type="EMBL" id="BA000050">
    <property type="protein sequence ID" value="BAE57065.1"/>
    <property type="molecule type" value="Genomic_DNA"/>
</dbReference>
<dbReference type="SMR" id="Q2UN00"/>
<dbReference type="STRING" id="510516.Q2UN00"/>
<dbReference type="CAZy" id="GH2">
    <property type="family name" value="Glycoside Hydrolase Family 2"/>
</dbReference>
<dbReference type="GlyCosmos" id="Q2UN00">
    <property type="glycosylation" value="15 sites, No reported glycans"/>
</dbReference>
<dbReference type="EnsemblFungi" id="BAE57065">
    <property type="protein sequence ID" value="BAE57065"/>
    <property type="gene ID" value="AO090001000556"/>
</dbReference>
<dbReference type="VEuPathDB" id="FungiDB:AO090001000556"/>
<dbReference type="HOGENOM" id="CLU_005015_3_0_1"/>
<dbReference type="OMA" id="PWKPAYI"/>
<dbReference type="UniPathway" id="UPA00280"/>
<dbReference type="Proteomes" id="UP000006564">
    <property type="component" value="Chromosome 2"/>
</dbReference>
<dbReference type="GO" id="GO:0005576">
    <property type="term" value="C:extracellular region"/>
    <property type="evidence" value="ECO:0007669"/>
    <property type="project" value="UniProtKB-SubCell"/>
</dbReference>
<dbReference type="GO" id="GO:0004567">
    <property type="term" value="F:beta-mannosidase activity"/>
    <property type="evidence" value="ECO:0007669"/>
    <property type="project" value="UniProtKB-EC"/>
</dbReference>
<dbReference type="GO" id="GO:0006516">
    <property type="term" value="P:glycoprotein catabolic process"/>
    <property type="evidence" value="ECO:0007669"/>
    <property type="project" value="TreeGrafter"/>
</dbReference>
<dbReference type="GO" id="GO:0000272">
    <property type="term" value="P:polysaccharide catabolic process"/>
    <property type="evidence" value="ECO:0007669"/>
    <property type="project" value="UniProtKB-KW"/>
</dbReference>
<dbReference type="FunFam" id="2.60.40.10:FF:001511">
    <property type="entry name" value="Beta-mannosidase A"/>
    <property type="match status" value="1"/>
</dbReference>
<dbReference type="FunFam" id="2.60.40.10:FF:002310">
    <property type="entry name" value="Beta-mannosidase A"/>
    <property type="match status" value="1"/>
</dbReference>
<dbReference type="FunFam" id="3.20.20.80:FF:000084">
    <property type="entry name" value="Beta-mannosidase A"/>
    <property type="match status" value="1"/>
</dbReference>
<dbReference type="Gene3D" id="2.60.120.260">
    <property type="entry name" value="Galactose-binding domain-like"/>
    <property type="match status" value="1"/>
</dbReference>
<dbReference type="Gene3D" id="3.20.20.80">
    <property type="entry name" value="Glycosidases"/>
    <property type="match status" value="1"/>
</dbReference>
<dbReference type="Gene3D" id="2.60.40.10">
    <property type="entry name" value="Immunoglobulins"/>
    <property type="match status" value="3"/>
</dbReference>
<dbReference type="InterPro" id="IPR036156">
    <property type="entry name" value="Beta-gal/glucu_dom_sf"/>
</dbReference>
<dbReference type="InterPro" id="IPR054593">
    <property type="entry name" value="Beta-mannosidase-like_N2"/>
</dbReference>
<dbReference type="InterPro" id="IPR050887">
    <property type="entry name" value="Beta-mannosidase_GH2"/>
</dbReference>
<dbReference type="InterPro" id="IPR041625">
    <property type="entry name" value="Beta-mannosidase_Ig"/>
</dbReference>
<dbReference type="InterPro" id="IPR008979">
    <property type="entry name" value="Galactose-bd-like_sf"/>
</dbReference>
<dbReference type="InterPro" id="IPR006102">
    <property type="entry name" value="Glyco_hydro_2_Ig-like"/>
</dbReference>
<dbReference type="InterPro" id="IPR017853">
    <property type="entry name" value="Glycoside_hydrolase_SF"/>
</dbReference>
<dbReference type="InterPro" id="IPR013783">
    <property type="entry name" value="Ig-like_fold"/>
</dbReference>
<dbReference type="InterPro" id="IPR041447">
    <property type="entry name" value="Mannosidase_ig"/>
</dbReference>
<dbReference type="PANTHER" id="PTHR43730">
    <property type="entry name" value="BETA-MANNOSIDASE"/>
    <property type="match status" value="1"/>
</dbReference>
<dbReference type="PANTHER" id="PTHR43730:SF5">
    <property type="entry name" value="BETA-MANNOSIDASE A"/>
    <property type="match status" value="1"/>
</dbReference>
<dbReference type="Pfam" id="PF00703">
    <property type="entry name" value="Glyco_hydro_2"/>
    <property type="match status" value="1"/>
</dbReference>
<dbReference type="Pfam" id="PF22666">
    <property type="entry name" value="Glyco_hydro_2_N2"/>
    <property type="match status" value="2"/>
</dbReference>
<dbReference type="Pfam" id="PF17753">
    <property type="entry name" value="Ig_mannosidase"/>
    <property type="match status" value="1"/>
</dbReference>
<dbReference type="Pfam" id="PF17786">
    <property type="entry name" value="Mannosidase_ig"/>
    <property type="match status" value="1"/>
</dbReference>
<dbReference type="SUPFAM" id="SSF51445">
    <property type="entry name" value="(Trans)glycosidases"/>
    <property type="match status" value="1"/>
</dbReference>
<dbReference type="SUPFAM" id="SSF49303">
    <property type="entry name" value="beta-Galactosidase/glucuronidase domain"/>
    <property type="match status" value="2"/>
</dbReference>
<dbReference type="SUPFAM" id="SSF49785">
    <property type="entry name" value="Galactose-binding domain-like"/>
    <property type="match status" value="1"/>
</dbReference>
<sequence length="914" mass="102870">MRFTATAAALVASSIPATLGQHVRDLSNEKWTLSSDALNHTVPGNLPSHAHLDLLKAGVIDDPYHGLNDFNLRWIPESNWTYTTDKIKDLMPIEFCGKYVASTNNQYRQYSFDVSQILEGCNEDPILKIDFGSAPNIVNAIAEDRNSPVWPDGIQQTYEYPNRWFMRKEQSDFGWDWGPAFAPAGPWKPAYIVQLPKAQNIHVLNTDLDIYRKGQINHLPPDQSQPWVVNASIDFVGSLPPNPSMSIEFKDTKSGEILTSKRIGNVTVSGNSVTGVTVLGGVTPKLWWPLGLGDQNLYNITVTVTGHQNQTLAHVTKRTGFRTIFLNQRNITDAQLAQGIAPGANWHFEVNGHEFYAKGSNIIPPDAFWPRVTEARMARLFDAVVAGNQNMLRVWSSGIYLHDFIYDLADERGILLWSEFEFSDALYPVDDAFLDNIAAEVVYNVRRVNHHPSLALWAGGNEIESLMLPTVERKAPEEYAKYVGEYEKLYISLILPLVYQNTRSITYSPSSTTEGYLDVDLSAPVPMVERYHNTTPGSYYGDTDFYNYDSSVSFNSHVYPVGRFANEFGYHSMPSLQTWQQAVDPEDLHFNSTTVMLRNHHYPAGGTFTDNFHNTSLGMGEMTIAVQRYYPIPNKLDSVANFSAWCHATQLFQADMYKSEIQFYRRGSGMPERQLGSLYWQLEDIWQAPSWAGIEYGGRWKVLHYVSRDIYQPIIVSPFWNYTTGDLDLYVTSDLWESAKGKVNLTWLDLSGTPLPHNAGTPGSVPFNVGALNTTKIYSTNIKNLTLPNPKDAILVLSLSGEGHLPNSDKKTTFTHQNHFTPVFPKDLALVDPGLELSYNTKSKTFTVEAKSGVSLYTWLDYPADVVGYFDENAFVLLPGQKKEIGFTVQEDNTDGKWVQGVTVQSLWNQTLEK</sequence>
<protein>
    <recommendedName>
        <fullName>Beta-mannosidase A</fullName>
        <ecNumber>3.2.1.25</ecNumber>
    </recommendedName>
    <alternativeName>
        <fullName>Mannanase A</fullName>
        <shortName>Mannase A</shortName>
    </alternativeName>
</protein>
<reference key="1">
    <citation type="journal article" date="2005" name="Nature">
        <title>Genome sequencing and analysis of Aspergillus oryzae.</title>
        <authorList>
            <person name="Machida M."/>
            <person name="Asai K."/>
            <person name="Sano M."/>
            <person name="Tanaka T."/>
            <person name="Kumagai T."/>
            <person name="Terai G."/>
            <person name="Kusumoto K."/>
            <person name="Arima T."/>
            <person name="Akita O."/>
            <person name="Kashiwagi Y."/>
            <person name="Abe K."/>
            <person name="Gomi K."/>
            <person name="Horiuchi H."/>
            <person name="Kitamoto K."/>
            <person name="Kobayashi T."/>
            <person name="Takeuchi M."/>
            <person name="Denning D.W."/>
            <person name="Galagan J.E."/>
            <person name="Nierman W.C."/>
            <person name="Yu J."/>
            <person name="Archer D.B."/>
            <person name="Bennett J.W."/>
            <person name="Bhatnagar D."/>
            <person name="Cleveland T.E."/>
            <person name="Fedorova N.D."/>
            <person name="Gotoh O."/>
            <person name="Horikawa H."/>
            <person name="Hosoyama A."/>
            <person name="Ichinomiya M."/>
            <person name="Igarashi R."/>
            <person name="Iwashita K."/>
            <person name="Juvvadi P.R."/>
            <person name="Kato M."/>
            <person name="Kato Y."/>
            <person name="Kin T."/>
            <person name="Kokubun A."/>
            <person name="Maeda H."/>
            <person name="Maeyama N."/>
            <person name="Maruyama J."/>
            <person name="Nagasaki H."/>
            <person name="Nakajima T."/>
            <person name="Oda K."/>
            <person name="Okada K."/>
            <person name="Paulsen I."/>
            <person name="Sakamoto K."/>
            <person name="Sawano T."/>
            <person name="Takahashi M."/>
            <person name="Takase K."/>
            <person name="Terabayashi Y."/>
            <person name="Wortman J.R."/>
            <person name="Yamada O."/>
            <person name="Yamagata Y."/>
            <person name="Anazawa H."/>
            <person name="Hata Y."/>
            <person name="Koide Y."/>
            <person name="Komori T."/>
            <person name="Koyama Y."/>
            <person name="Minetoki T."/>
            <person name="Suharnan S."/>
            <person name="Tanaka A."/>
            <person name="Isono K."/>
            <person name="Kuhara S."/>
            <person name="Ogasawara N."/>
            <person name="Kikuchi H."/>
        </authorList>
    </citation>
    <scope>NUCLEOTIDE SEQUENCE [LARGE SCALE GENOMIC DNA]</scope>
    <source>
        <strain>ATCC 42149 / RIB 40</strain>
    </source>
</reference>
<comment type="function">
    <text evidence="1">Exoglycosidase that cleaves the single beta-linked mannose residue from the non-reducing end of beta-mannosidic oligosaccharides of various complexity and length. Involved in the degradation of polymeric mannan and galactomannan (By similarity).</text>
</comment>
<comment type="catalytic activity">
    <reaction>
        <text>Hydrolysis of terminal, non-reducing beta-D-mannose residues in beta-D-mannosides.</text>
        <dbReference type="EC" id="3.2.1.25"/>
    </reaction>
</comment>
<comment type="pathway">
    <text>Glycan metabolism; N-glycan degradation.</text>
</comment>
<comment type="subunit">
    <text evidence="1">Homodimer.</text>
</comment>
<comment type="subcellular location">
    <subcellularLocation>
        <location evidence="1">Secreted</location>
    </subcellularLocation>
</comment>
<comment type="similarity">
    <text evidence="3">Belongs to the glycosyl hydrolase 2 family. Beta-mannosidase A subfamily.</text>
</comment>
<evidence type="ECO:0000250" key="1"/>
<evidence type="ECO:0000255" key="2"/>
<evidence type="ECO:0000305" key="3"/>
<gene>
    <name type="primary">mndA</name>
    <name type="ORF">AO090001000556</name>
</gene>
<keyword id="KW-0119">Carbohydrate metabolism</keyword>
<keyword id="KW-0325">Glycoprotein</keyword>
<keyword id="KW-0326">Glycosidase</keyword>
<keyword id="KW-0378">Hydrolase</keyword>
<keyword id="KW-0624">Polysaccharide degradation</keyword>
<keyword id="KW-1185">Reference proteome</keyword>
<keyword id="KW-0964">Secreted</keyword>
<keyword id="KW-0732">Signal</keyword>
<proteinExistence type="inferred from homology"/>
<accession>Q2UN00</accession>
<organism>
    <name type="scientific">Aspergillus oryzae (strain ATCC 42149 / RIB 40)</name>
    <name type="common">Yellow koji mold</name>
    <dbReference type="NCBI Taxonomy" id="510516"/>
    <lineage>
        <taxon>Eukaryota</taxon>
        <taxon>Fungi</taxon>
        <taxon>Dikarya</taxon>
        <taxon>Ascomycota</taxon>
        <taxon>Pezizomycotina</taxon>
        <taxon>Eurotiomycetes</taxon>
        <taxon>Eurotiomycetidae</taxon>
        <taxon>Eurotiales</taxon>
        <taxon>Aspergillaceae</taxon>
        <taxon>Aspergillus</taxon>
        <taxon>Aspergillus subgen. Circumdati</taxon>
    </lineage>
</organism>
<feature type="signal peptide" evidence="2">
    <location>
        <begin position="1"/>
        <end position="20"/>
    </location>
</feature>
<feature type="chain" id="PRO_0000394647" description="Beta-mannosidase A">
    <location>
        <begin position="21"/>
        <end position="914"/>
    </location>
</feature>
<feature type="active site" description="Proton donor" evidence="1">
    <location>
        <position position="462"/>
    </location>
</feature>
<feature type="glycosylation site" description="N-linked (GlcNAc...) asparagine" evidence="2">
    <location>
        <position position="39"/>
    </location>
</feature>
<feature type="glycosylation site" description="N-linked (GlcNAc...) asparagine" evidence="2">
    <location>
        <position position="79"/>
    </location>
</feature>
<feature type="glycosylation site" description="N-linked (GlcNAc...) asparagine" evidence="2">
    <location>
        <position position="230"/>
    </location>
</feature>
<feature type="glycosylation site" description="N-linked (GlcNAc...) asparagine" evidence="2">
    <location>
        <position position="265"/>
    </location>
</feature>
<feature type="glycosylation site" description="N-linked (GlcNAc...) asparagine" evidence="2">
    <location>
        <position position="299"/>
    </location>
</feature>
<feature type="glycosylation site" description="N-linked (GlcNAc...) asparagine" evidence="2">
    <location>
        <position position="309"/>
    </location>
</feature>
<feature type="glycosylation site" description="N-linked (GlcNAc...) asparagine" evidence="2">
    <location>
        <position position="330"/>
    </location>
</feature>
<feature type="glycosylation site" description="N-linked (GlcNAc...) asparagine" evidence="2">
    <location>
        <position position="591"/>
    </location>
</feature>
<feature type="glycosylation site" description="N-linked (GlcNAc...) asparagine" evidence="2">
    <location>
        <position position="614"/>
    </location>
</feature>
<feature type="glycosylation site" description="N-linked (GlcNAc...) asparagine" evidence="2">
    <location>
        <position position="641"/>
    </location>
</feature>
<feature type="glycosylation site" description="N-linked (GlcNAc...) asparagine" evidence="2">
    <location>
        <position position="721"/>
    </location>
</feature>
<feature type="glycosylation site" description="N-linked (GlcNAc...) asparagine" evidence="2">
    <location>
        <position position="744"/>
    </location>
</feature>
<feature type="glycosylation site" description="N-linked (GlcNAc...) asparagine" evidence="2">
    <location>
        <position position="773"/>
    </location>
</feature>
<feature type="glycosylation site" description="N-linked (GlcNAc...) asparagine" evidence="2">
    <location>
        <position position="784"/>
    </location>
</feature>
<feature type="glycosylation site" description="N-linked (GlcNAc...) asparagine" evidence="2">
    <location>
        <position position="909"/>
    </location>
</feature>